<reference key="1">
    <citation type="journal article" date="1991" name="Plant Physiol.">
        <title>Sequence of the Gossypium hirsutum D-genome alloallele of Legumin A and its mRNA.</title>
        <authorList>
            <person name="Galau G.A."/>
            <person name="Wang H.Y."/>
            <person name="Hughes D.W."/>
        </authorList>
    </citation>
    <scope>NUCLEOTIDE SEQUENCE [GENOMIC DNA / MRNA]</scope>
</reference>
<reference key="2">
    <citation type="journal article" date="1986" name="Plant Mol. Biol.">
        <title>Developmental biochemistry of cottonseed embryogenesis and germination. XVIII. cDNA and amino acid sequences of the members of the storage protein families.</title>
        <authorList>
            <person name="Chlan C.A."/>
            <person name="Pyle J.B."/>
            <person name="Legocki A.B."/>
            <person name="Dure L. III"/>
        </authorList>
        <dbReference type="AGRICOLA" id="IND87019922"/>
    </citation>
    <scope>NUCLEOTIDE SEQUENCE [MRNA] OF 3-509</scope>
</reference>
<keyword id="KW-1015">Disulfide bond</keyword>
<keyword id="KW-1185">Reference proteome</keyword>
<keyword id="KW-0708">Seed storage protein</keyword>
<keyword id="KW-0732">Signal</keyword>
<keyword id="KW-0758">Storage protein</keyword>
<gene>
    <name type="primary">LEGA</name>
</gene>
<dbReference type="EMBL" id="M69188">
    <property type="protein sequence ID" value="AAA33053.1"/>
    <property type="molecule type" value="Genomic_DNA"/>
</dbReference>
<dbReference type="EMBL" id="M73072">
    <property type="protein sequence ID" value="AAA33065.1"/>
    <property type="molecule type" value="mRNA"/>
</dbReference>
<dbReference type="EMBL" id="M16905">
    <property type="protein sequence ID" value="AAA33072.1"/>
    <property type="molecule type" value="mRNA"/>
</dbReference>
<dbReference type="PIR" id="B30838">
    <property type="entry name" value="FWCNBA"/>
</dbReference>
<dbReference type="RefSeq" id="XP_016701249.1">
    <property type="nucleotide sequence ID" value="XM_016845760.1"/>
</dbReference>
<dbReference type="SMR" id="P09802"/>
<dbReference type="STRING" id="3635.P09802"/>
<dbReference type="PaxDb" id="3635-P09802"/>
<dbReference type="KEGG" id="ghi:107916455"/>
<dbReference type="OMA" id="AHWIYNT"/>
<dbReference type="OrthoDB" id="63215at41938"/>
<dbReference type="Proteomes" id="UP000189702">
    <property type="component" value="Chromosome 3"/>
</dbReference>
<dbReference type="GO" id="GO:0045735">
    <property type="term" value="F:nutrient reservoir activity"/>
    <property type="evidence" value="ECO:0007669"/>
    <property type="project" value="UniProtKB-KW"/>
</dbReference>
<dbReference type="GO" id="GO:0010431">
    <property type="term" value="P:seed maturation"/>
    <property type="evidence" value="ECO:0007669"/>
    <property type="project" value="UniProtKB-ARBA"/>
</dbReference>
<dbReference type="CDD" id="cd02243">
    <property type="entry name" value="cupin_11S_legumin_C"/>
    <property type="match status" value="1"/>
</dbReference>
<dbReference type="CDD" id="cd02242">
    <property type="entry name" value="cupin_11S_legumin_N"/>
    <property type="match status" value="1"/>
</dbReference>
<dbReference type="FunFam" id="2.60.120.10:FF:000073">
    <property type="entry name" value="Glycinin G1"/>
    <property type="match status" value="1"/>
</dbReference>
<dbReference type="Gene3D" id="2.60.120.10">
    <property type="entry name" value="Jelly Rolls"/>
    <property type="match status" value="3"/>
</dbReference>
<dbReference type="InterPro" id="IPR022379">
    <property type="entry name" value="11S_seedstore_CS"/>
</dbReference>
<dbReference type="InterPro" id="IPR006044">
    <property type="entry name" value="11S_seedstore_pln"/>
</dbReference>
<dbReference type="InterPro" id="IPR006045">
    <property type="entry name" value="Cupin_1"/>
</dbReference>
<dbReference type="InterPro" id="IPR014710">
    <property type="entry name" value="RmlC-like_jellyroll"/>
</dbReference>
<dbReference type="InterPro" id="IPR011051">
    <property type="entry name" value="RmlC_Cupin_sf"/>
</dbReference>
<dbReference type="InterPro" id="IPR050253">
    <property type="entry name" value="Seed_Storage-Functional"/>
</dbReference>
<dbReference type="PANTHER" id="PTHR31189:SF35">
    <property type="entry name" value="12S SEED STORAGE PROTEIN CRB"/>
    <property type="match status" value="1"/>
</dbReference>
<dbReference type="PANTHER" id="PTHR31189">
    <property type="entry name" value="OS03G0336100 PROTEIN-RELATED"/>
    <property type="match status" value="1"/>
</dbReference>
<dbReference type="Pfam" id="PF00190">
    <property type="entry name" value="Cupin_1"/>
    <property type="match status" value="2"/>
</dbReference>
<dbReference type="PRINTS" id="PR00439">
    <property type="entry name" value="11SGLOBULIN"/>
</dbReference>
<dbReference type="SMART" id="SM00835">
    <property type="entry name" value="Cupin_1"/>
    <property type="match status" value="2"/>
</dbReference>
<dbReference type="SUPFAM" id="SSF51182">
    <property type="entry name" value="RmlC-like cupins"/>
    <property type="match status" value="1"/>
</dbReference>
<dbReference type="PROSITE" id="PS00305">
    <property type="entry name" value="11S_SEED_STORAGE"/>
    <property type="match status" value="1"/>
</dbReference>
<feature type="signal peptide">
    <location>
        <begin position="1"/>
        <end position="21"/>
    </location>
</feature>
<feature type="chain" id="PRO_0000032060" description="Legumin A">
    <location>
        <begin position="22"/>
        <end position="509"/>
    </location>
</feature>
<feature type="chain" id="PRO_0000032061" description="Legumin A acidic chain">
    <location>
        <begin position="22"/>
        <end position="324"/>
    </location>
</feature>
<feature type="chain" id="PRO_0000032062" description="Legumin A basic chain">
    <location>
        <begin position="325"/>
        <end position="509"/>
    </location>
</feature>
<feature type="domain" description="Cupin type-1 1" evidence="2">
    <location>
        <begin position="39"/>
        <end position="273"/>
    </location>
</feature>
<feature type="domain" description="Cupin type-1 2" evidence="2">
    <location>
        <begin position="337"/>
        <end position="486"/>
    </location>
</feature>
<feature type="region of interest" description="Disordered" evidence="3">
    <location>
        <begin position="187"/>
        <end position="248"/>
    </location>
</feature>
<feature type="region of interest" description="Disordered" evidence="3">
    <location>
        <begin position="298"/>
        <end position="325"/>
    </location>
</feature>
<feature type="compositionally biased region" description="Acidic residues" evidence="3">
    <location>
        <begin position="212"/>
        <end position="228"/>
    </location>
</feature>
<feature type="compositionally biased region" description="Basic and acidic residues" evidence="3">
    <location>
        <begin position="299"/>
        <end position="314"/>
    </location>
</feature>
<feature type="disulfide bond" evidence="1">
    <location>
        <begin position="34"/>
        <end position="67"/>
    </location>
</feature>
<feature type="disulfide bond" description="Interchain (between acidic and basic chains)" evidence="2">
    <location>
        <begin position="110"/>
        <end position="331"/>
    </location>
</feature>
<feature type="sequence conflict" description="In Ref. 2; AAA33072." evidence="4" ref="2">
    <original>I</original>
    <variation>V</variation>
    <location>
        <position position="3"/>
    </location>
</feature>
<name>LEGA_GOSHI</name>
<proteinExistence type="evidence at transcript level"/>
<organism>
    <name type="scientific">Gossypium hirsutum</name>
    <name type="common">Upland cotton</name>
    <name type="synonym">Gossypium mexicanum</name>
    <dbReference type="NCBI Taxonomy" id="3635"/>
    <lineage>
        <taxon>Eukaryota</taxon>
        <taxon>Viridiplantae</taxon>
        <taxon>Streptophyta</taxon>
        <taxon>Embryophyta</taxon>
        <taxon>Tracheophyta</taxon>
        <taxon>Spermatophyta</taxon>
        <taxon>Magnoliopsida</taxon>
        <taxon>eudicotyledons</taxon>
        <taxon>Gunneridae</taxon>
        <taxon>Pentapetalae</taxon>
        <taxon>rosids</taxon>
        <taxon>malvids</taxon>
        <taxon>Malvales</taxon>
        <taxon>Malvaceae</taxon>
        <taxon>Malvoideae</taxon>
        <taxon>Gossypium</taxon>
    </lineage>
</organism>
<evidence type="ECO:0000250" key="1"/>
<evidence type="ECO:0000255" key="2"/>
<evidence type="ECO:0000256" key="3">
    <source>
        <dbReference type="SAM" id="MobiDB-lite"/>
    </source>
</evidence>
<evidence type="ECO:0000305" key="4"/>
<protein>
    <recommendedName>
        <fullName>Legumin A</fullName>
    </recommendedName>
    <alternativeName>
        <fullName>Beta-globulin</fullName>
    </alternativeName>
    <alternativeName>
        <fullName>LEGA-C94</fullName>
    </alternativeName>
    <component>
        <recommendedName>
            <fullName>Legumin A acidic chain</fullName>
        </recommendedName>
    </component>
    <component>
        <recommendedName>
            <fullName>Legumin A basic chain</fullName>
        </recommendedName>
    </component>
</protein>
<comment type="function">
    <text>This is a seed storage protein.</text>
</comment>
<comment type="subunit">
    <text>Hexamer; each subunit is composed of an acidic and a basic chain derived from a single precursor and linked by a disulfide bond.</text>
</comment>
<comment type="similarity">
    <text evidence="4">Belongs to the 11S seed storage protein (globulins) family.</text>
</comment>
<sequence length="509" mass="58425">MAINPSLLFLSLLFLFNGCLARQTFSSQQSQNECQINRLRASAPQTRIRSEAGTTEWWNPNCQQLRCAGVSVMRQTIEPNGLVLPSFTNAPQLLYIVQGRGIQGIVMPGCAETFQDSQQWQHQSRGRFQDQHQKVRRFRQGDIIALPQGVVHWSYNDGNERVVTINLLDTGNSANQLDNIPRRFHLAGNPEEEQRQLRRLAQQMQGRSERGEESEEEEGEGEEEEEEDNPSRRSRHQEEEEQGRESSSCNNLLCAFDRNFLAQAFNVDHDIIRKIQRVRGNRGTIIRVRDRLQVVTPPRMEEEEREERQQEQRYRHTRGGSQDNGLEETFCSMRIKENLADPERADIFNPQAGRISTLNRFNLPILQRLELSAERGVLYNRAGLIPQWNVNAHKILYMLRGCARVQVVNHNGDAVFDDNVEQGQLLTVPQNFAFMKQAGNEGAEWISFFTNSEATNTPMAGSVSFMRALPEEVVAASYQVSREDARRIKFNNKNTFFFTPSQSERRADA</sequence>
<accession>P09802</accession>
<accession>Q39790</accession>